<protein>
    <recommendedName>
        <fullName>Required for respiratory growth protein 9, mitochondrial</fullName>
    </recommendedName>
</protein>
<keyword id="KW-0496">Mitochondrion</keyword>
<keyword id="KW-1185">Reference proteome</keyword>
<keyword id="KW-0809">Transit peptide</keyword>
<feature type="transit peptide" description="Mitochondrion" evidence="2">
    <location>
        <begin position="1"/>
        <end position="40"/>
    </location>
</feature>
<feature type="chain" id="PRO_0000407962" description="Required for respiratory growth protein 9, mitochondrial">
    <location>
        <begin position="41"/>
        <end position="250"/>
    </location>
</feature>
<feature type="region of interest" description="Disordered" evidence="3">
    <location>
        <begin position="43"/>
        <end position="80"/>
    </location>
</feature>
<feature type="region of interest" description="Disordered" evidence="3">
    <location>
        <begin position="225"/>
        <end position="250"/>
    </location>
</feature>
<feature type="compositionally biased region" description="Polar residues" evidence="3">
    <location>
        <begin position="238"/>
        <end position="250"/>
    </location>
</feature>
<reference key="1">
    <citation type="journal article" date="2013" name="G3 (Bethesda)">
        <title>Comparative genomics of a plant-pathogenic fungus, Pyrenophora tritici-repentis, reveals transduplication and the impact of repeat elements on pathogenicity and population divergence.</title>
        <authorList>
            <person name="Manning V.A."/>
            <person name="Pandelova I."/>
            <person name="Dhillon B."/>
            <person name="Wilhelm L.J."/>
            <person name="Goodwin S.B."/>
            <person name="Berlin A.M."/>
            <person name="Figueroa M."/>
            <person name="Freitag M."/>
            <person name="Hane J.K."/>
            <person name="Henrissat B."/>
            <person name="Holman W.H."/>
            <person name="Kodira C.D."/>
            <person name="Martin J."/>
            <person name="Oliver R.P."/>
            <person name="Robbertse B."/>
            <person name="Schackwitz W."/>
            <person name="Schwartz D.C."/>
            <person name="Spatafora J.W."/>
            <person name="Turgeon B.G."/>
            <person name="Yandava C."/>
            <person name="Young S."/>
            <person name="Zhou S."/>
            <person name="Zeng Q."/>
            <person name="Grigoriev I.V."/>
            <person name="Ma L.-J."/>
            <person name="Ciuffetti L.M."/>
        </authorList>
    </citation>
    <scope>NUCLEOTIDE SEQUENCE [LARGE SCALE GENOMIC DNA]</scope>
    <source>
        <strain>Pt-1C-BFP</strain>
    </source>
</reference>
<proteinExistence type="inferred from homology"/>
<sequence>MSCHNCSRTALGLFIRSLTNIQPAFAACRPLIHPQSLRFLSDARRPRRVDQSASRPDGVKPDTEIEDELSGEGFPRKRERPAWAIQKEALKEKLGGEAWNPRKKLSPDTMEGIRHLNSTQPDKFTTPVLAEHFKVSPEAIRRILKSNWKPSDKEYEERMERWNKRGERIWSNLVEMGVKPPKRWRDMGVGRARNGDVPRWKSRERNLVDVKDSASSDFTEYIPDEDIIPTVGKESKSKPTTSSIPLSERL</sequence>
<comment type="function">
    <text evidence="1">Required for respiratory activity and maintenance and expression of the mitochondrial genome.</text>
</comment>
<comment type="subcellular location">
    <subcellularLocation>
        <location evidence="1">Mitochondrion</location>
    </subcellularLocation>
</comment>
<comment type="similarity">
    <text evidence="4">Belongs to the RRG9 family.</text>
</comment>
<evidence type="ECO:0000250" key="1"/>
<evidence type="ECO:0000255" key="2"/>
<evidence type="ECO:0000256" key="3">
    <source>
        <dbReference type="SAM" id="MobiDB-lite"/>
    </source>
</evidence>
<evidence type="ECO:0000305" key="4"/>
<gene>
    <name type="primary">rrg9</name>
    <name type="ORF">PTRG_05610</name>
</gene>
<name>RRG9_PYRTR</name>
<dbReference type="EMBL" id="DS231619">
    <property type="protein sequence ID" value="EDU48530.1"/>
    <property type="molecule type" value="Genomic_DNA"/>
</dbReference>
<dbReference type="RefSeq" id="XP_001935943.1">
    <property type="nucleotide sequence ID" value="XM_001935908.1"/>
</dbReference>
<dbReference type="SMR" id="B2W722"/>
<dbReference type="STRING" id="426418.B2W722"/>
<dbReference type="EnsemblFungi" id="EDU48530">
    <property type="protein sequence ID" value="EDU48530"/>
    <property type="gene ID" value="PTRG_05610"/>
</dbReference>
<dbReference type="GeneID" id="6343863"/>
<dbReference type="KEGG" id="ptrr:6343863"/>
<dbReference type="eggNOG" id="ENOG502S7IA">
    <property type="taxonomic scope" value="Eukaryota"/>
</dbReference>
<dbReference type="HOGENOM" id="CLU_047598_1_0_1"/>
<dbReference type="InParanoid" id="B2W722"/>
<dbReference type="OMA" id="WRDMGVG"/>
<dbReference type="OrthoDB" id="6776at28556"/>
<dbReference type="Proteomes" id="UP000001471">
    <property type="component" value="Unassembled WGS sequence"/>
</dbReference>
<dbReference type="GO" id="GO:0005739">
    <property type="term" value="C:mitochondrion"/>
    <property type="evidence" value="ECO:0007669"/>
    <property type="project" value="UniProtKB-SubCell"/>
</dbReference>
<dbReference type="GO" id="GO:0005634">
    <property type="term" value="C:nucleus"/>
    <property type="evidence" value="ECO:0007669"/>
    <property type="project" value="TreeGrafter"/>
</dbReference>
<dbReference type="InterPro" id="IPR010487">
    <property type="entry name" value="NGRN/Rrg9"/>
</dbReference>
<dbReference type="PANTHER" id="PTHR13475">
    <property type="entry name" value="NEUGRIN"/>
    <property type="match status" value="1"/>
</dbReference>
<dbReference type="PANTHER" id="PTHR13475:SF3">
    <property type="entry name" value="NEUGRIN"/>
    <property type="match status" value="1"/>
</dbReference>
<dbReference type="Pfam" id="PF06413">
    <property type="entry name" value="Neugrin"/>
    <property type="match status" value="1"/>
</dbReference>
<accession>B2W722</accession>
<organism>
    <name type="scientific">Pyrenophora tritici-repentis (strain Pt-1C-BFP)</name>
    <name type="common">Wheat tan spot fungus</name>
    <name type="synonym">Drechslera tritici-repentis</name>
    <dbReference type="NCBI Taxonomy" id="426418"/>
    <lineage>
        <taxon>Eukaryota</taxon>
        <taxon>Fungi</taxon>
        <taxon>Dikarya</taxon>
        <taxon>Ascomycota</taxon>
        <taxon>Pezizomycotina</taxon>
        <taxon>Dothideomycetes</taxon>
        <taxon>Pleosporomycetidae</taxon>
        <taxon>Pleosporales</taxon>
        <taxon>Pleosporineae</taxon>
        <taxon>Pleosporaceae</taxon>
        <taxon>Pyrenophora</taxon>
    </lineage>
</organism>